<reference key="1">
    <citation type="journal article" date="1997" name="Gene">
        <title>Isolation and sequencing of the cDNA encoding the motilin precursor from sheep intestine.</title>
        <authorList>
            <person name="De Clercq P."/>
            <person name="Depoortere I."/>
            <person name="Peeters T.L."/>
        </authorList>
    </citation>
    <scope>NUCLEOTIDE SEQUENCE [MRNA]</scope>
    <source>
        <tissue>Intestine</tissue>
    </source>
</reference>
<protein>
    <recommendedName>
        <fullName>Promotilin</fullName>
    </recommendedName>
    <component>
        <recommendedName>
            <fullName>Motilin</fullName>
        </recommendedName>
    </component>
    <component>
        <recommendedName>
            <fullName>Motilin-associated peptide</fullName>
            <shortName>MAP</shortName>
        </recommendedName>
    </component>
</protein>
<proteinExistence type="inferred from homology"/>
<accession>O18845</accession>
<feature type="signal peptide" evidence="1">
    <location>
        <begin position="1"/>
        <end position="25"/>
    </location>
</feature>
<feature type="chain" id="PRO_0000342175" description="Promotilin">
    <location>
        <begin position="26"/>
        <end position="115"/>
    </location>
</feature>
<feature type="peptide" id="PRO_0000019192" description="Motilin">
    <location>
        <begin position="26"/>
        <end position="47"/>
    </location>
</feature>
<feature type="peptide" id="PRO_0000019193" description="Motilin-associated peptide">
    <location>
        <begin position="50"/>
        <end position="115"/>
    </location>
</feature>
<feature type="region of interest" description="Disordered" evidence="2">
    <location>
        <begin position="43"/>
        <end position="73"/>
    </location>
</feature>
<evidence type="ECO:0000250" key="1"/>
<evidence type="ECO:0000256" key="2">
    <source>
        <dbReference type="SAM" id="MobiDB-lite"/>
    </source>
</evidence>
<evidence type="ECO:0000305" key="3"/>
<comment type="function">
    <text evidence="1">Plays an important role in the regulation of interdigestive gastrointestinal motility and indirectly causes rhythmic contraction of duodenal and colonic smooth muscle.</text>
</comment>
<comment type="subcellular location">
    <subcellularLocation>
        <location>Secreted</location>
    </subcellularLocation>
</comment>
<comment type="similarity">
    <text evidence="3">Belongs to the motilin family.</text>
</comment>
<keyword id="KW-0165">Cleavage on pair of basic residues</keyword>
<keyword id="KW-0372">Hormone</keyword>
<keyword id="KW-1185">Reference proteome</keyword>
<keyword id="KW-0964">Secreted</keyword>
<keyword id="KW-0732">Signal</keyword>
<organism>
    <name type="scientific">Ovis aries</name>
    <name type="common">Sheep</name>
    <dbReference type="NCBI Taxonomy" id="9940"/>
    <lineage>
        <taxon>Eukaryota</taxon>
        <taxon>Metazoa</taxon>
        <taxon>Chordata</taxon>
        <taxon>Craniata</taxon>
        <taxon>Vertebrata</taxon>
        <taxon>Euteleostomi</taxon>
        <taxon>Mammalia</taxon>
        <taxon>Eutheria</taxon>
        <taxon>Laurasiatheria</taxon>
        <taxon>Artiodactyla</taxon>
        <taxon>Ruminantia</taxon>
        <taxon>Pecora</taxon>
        <taxon>Bovidae</taxon>
        <taxon>Caprinae</taxon>
        <taxon>Ovis</taxon>
    </lineage>
</organism>
<sequence length="115" mass="12956">MLSRKATAILLVVHAAAMLASQTEGFVPIFTYGEVQRMQEKERYKGQKKSLSVQQRSEEVGPVDPAEPREEKQEVIKLTAPVEIGMRMNSRQLEKYQATLEGLLRKALPSSRNAQ</sequence>
<gene>
    <name type="primary">MLN</name>
</gene>
<dbReference type="EMBL" id="AF022771">
    <property type="protein sequence ID" value="AAB80930.1"/>
    <property type="molecule type" value="mRNA"/>
</dbReference>
<dbReference type="PIR" id="JC6511">
    <property type="entry name" value="JC6511"/>
</dbReference>
<dbReference type="RefSeq" id="NP_001009439.1">
    <property type="nucleotide sequence ID" value="NM_001009439.1"/>
</dbReference>
<dbReference type="STRING" id="9940.ENSOARP00000011236"/>
<dbReference type="PaxDb" id="9940-ENSOARP00000011236"/>
<dbReference type="GeneID" id="443473"/>
<dbReference type="KEGG" id="oas:443473"/>
<dbReference type="CTD" id="4295"/>
<dbReference type="eggNOG" id="ENOG502SS7F">
    <property type="taxonomic scope" value="Eukaryota"/>
</dbReference>
<dbReference type="OrthoDB" id="9937685at2759"/>
<dbReference type="Proteomes" id="UP000002356">
    <property type="component" value="Unplaced"/>
</dbReference>
<dbReference type="GO" id="GO:0005576">
    <property type="term" value="C:extracellular region"/>
    <property type="evidence" value="ECO:0007669"/>
    <property type="project" value="UniProtKB-SubCell"/>
</dbReference>
<dbReference type="GO" id="GO:0005179">
    <property type="term" value="F:hormone activity"/>
    <property type="evidence" value="ECO:0007669"/>
    <property type="project" value="UniProtKB-KW"/>
</dbReference>
<dbReference type="GO" id="GO:0031788">
    <property type="term" value="F:motilin receptor binding"/>
    <property type="evidence" value="ECO:0007669"/>
    <property type="project" value="TreeGrafter"/>
</dbReference>
<dbReference type="InterPro" id="IPR006737">
    <property type="entry name" value="Motilin_assoc"/>
</dbReference>
<dbReference type="InterPro" id="IPR006738">
    <property type="entry name" value="Motilin_ghrelin"/>
</dbReference>
<dbReference type="InterPro" id="IPR015662">
    <property type="entry name" value="Promotilin"/>
</dbReference>
<dbReference type="PANTHER" id="PTHR14156">
    <property type="entry name" value="MOTILIN"/>
    <property type="match status" value="1"/>
</dbReference>
<dbReference type="PANTHER" id="PTHR14156:SF0">
    <property type="entry name" value="PROMOTILIN"/>
    <property type="match status" value="1"/>
</dbReference>
<dbReference type="Pfam" id="PF04643">
    <property type="entry name" value="Motilin_assoc"/>
    <property type="match status" value="1"/>
</dbReference>
<dbReference type="Pfam" id="PF04644">
    <property type="entry name" value="Motilin_ghrelin"/>
    <property type="match status" value="1"/>
</dbReference>
<name>MOTI_SHEEP</name>